<sequence length="405" mass="47022">MSEKRRDNKGRILKTGESQRKDGRYLYKYIDSFGEPQFVYSWKLVATDRVPAGKRDCISLREKIAELQKDIHDGIDVVGKKMTLCQLYAKQNAQRPKVRKNTETGRKYLMDILKKDKLGVRSIDSIKPSDAKEWAIRMSENGYAYQTINNYKRSLKASFYIAIQDDCVRKNPFDFQLKAVLDDDTVPKTVLTEEQEEKLLAFAKADKTYSKNYDEILILLKTGLRISEFGGLTLPDLDFENRLVNIDHQLLRDTEIGYYIETPKTKSGERQVPMVEEAYQAFKRVLANRKNDKRVEIDGYSDFLFLNRKNYPKVASDYNGMMKGLVKKYNKYNEDKLPHITPHSLRHTFCTNYANAGMNPKALQYIMGHANIAMTLNYYAHATFDSAMAEMKRLNKEKQQERLVA</sequence>
<protein>
    <recommendedName>
        <fullName>Transposase from transposon Tn1545</fullName>
    </recommendedName>
    <alternativeName>
        <fullName>Integrase</fullName>
    </alternativeName>
</protein>
<dbReference type="EMBL" id="X61025">
    <property type="protein sequence ID" value="CAA43360.1"/>
    <property type="molecule type" value="Genomic_DNA"/>
</dbReference>
<dbReference type="PIR" id="S05386">
    <property type="entry name" value="RSSOP5"/>
</dbReference>
<dbReference type="RefSeq" id="WP_001291561.1">
    <property type="nucleotide sequence ID" value="NZ_WNIA01000003.1"/>
</dbReference>
<dbReference type="BMRB" id="P62905"/>
<dbReference type="SMR" id="P62905"/>
<dbReference type="OMA" id="ITMTLNY"/>
<dbReference type="GO" id="GO:0003677">
    <property type="term" value="F:DNA binding"/>
    <property type="evidence" value="ECO:0007669"/>
    <property type="project" value="UniProtKB-KW"/>
</dbReference>
<dbReference type="GO" id="GO:0008907">
    <property type="term" value="F:integrase activity"/>
    <property type="evidence" value="ECO:0007669"/>
    <property type="project" value="InterPro"/>
</dbReference>
<dbReference type="GO" id="GO:0006310">
    <property type="term" value="P:DNA recombination"/>
    <property type="evidence" value="ECO:0007669"/>
    <property type="project" value="UniProtKB-KW"/>
</dbReference>
<dbReference type="GO" id="GO:0075713">
    <property type="term" value="P:establishment of integrated proviral latency"/>
    <property type="evidence" value="ECO:0007669"/>
    <property type="project" value="UniProtKB-KW"/>
</dbReference>
<dbReference type="GO" id="GO:0046718">
    <property type="term" value="P:symbiont entry into host cell"/>
    <property type="evidence" value="ECO:0007669"/>
    <property type="project" value="UniProtKB-KW"/>
</dbReference>
<dbReference type="GO" id="GO:0044826">
    <property type="term" value="P:viral genome integration into host DNA"/>
    <property type="evidence" value="ECO:0007669"/>
    <property type="project" value="UniProtKB-KW"/>
</dbReference>
<dbReference type="CDD" id="cd01189">
    <property type="entry name" value="INT_ICEBs1_C_like"/>
    <property type="match status" value="1"/>
</dbReference>
<dbReference type="Gene3D" id="1.10.150.130">
    <property type="match status" value="1"/>
</dbReference>
<dbReference type="Gene3D" id="3.30.160.60">
    <property type="entry name" value="Classic Zinc Finger"/>
    <property type="match status" value="1"/>
</dbReference>
<dbReference type="Gene3D" id="1.10.443.10">
    <property type="entry name" value="Intergrase catalytic core"/>
    <property type="match status" value="1"/>
</dbReference>
<dbReference type="InterPro" id="IPR044068">
    <property type="entry name" value="CB"/>
</dbReference>
<dbReference type="InterPro" id="IPR016177">
    <property type="entry name" value="DNA-bd_dom_sf"/>
</dbReference>
<dbReference type="InterPro" id="IPR011010">
    <property type="entry name" value="DNA_brk_join_enz"/>
</dbReference>
<dbReference type="InterPro" id="IPR013762">
    <property type="entry name" value="Integrase-like_cat_sf"/>
</dbReference>
<dbReference type="InterPro" id="IPR002104">
    <property type="entry name" value="Integrase_catalytic"/>
</dbReference>
<dbReference type="InterPro" id="IPR010998">
    <property type="entry name" value="Integrase_recombinase_N"/>
</dbReference>
<dbReference type="InterPro" id="IPR004191">
    <property type="entry name" value="Integrase_Tn916-type_DNA-bd_N"/>
</dbReference>
<dbReference type="InterPro" id="IPR050090">
    <property type="entry name" value="Tyrosine_recombinase_XerCD"/>
</dbReference>
<dbReference type="PANTHER" id="PTHR30349:SF41">
    <property type="entry name" value="INTEGRASE_RECOMBINASE PROTEIN MJ0367-RELATED"/>
    <property type="match status" value="1"/>
</dbReference>
<dbReference type="PANTHER" id="PTHR30349">
    <property type="entry name" value="PHAGE INTEGRASE-RELATED"/>
    <property type="match status" value="1"/>
</dbReference>
<dbReference type="Pfam" id="PF02920">
    <property type="entry name" value="Integrase_DNA"/>
    <property type="match status" value="1"/>
</dbReference>
<dbReference type="Pfam" id="PF00589">
    <property type="entry name" value="Phage_integrase"/>
    <property type="match status" value="1"/>
</dbReference>
<dbReference type="SUPFAM" id="SSF56349">
    <property type="entry name" value="DNA breaking-rejoining enzymes"/>
    <property type="match status" value="1"/>
</dbReference>
<dbReference type="SUPFAM" id="SSF54171">
    <property type="entry name" value="DNA-binding domain"/>
    <property type="match status" value="1"/>
</dbReference>
<dbReference type="PROSITE" id="PS51900">
    <property type="entry name" value="CB"/>
    <property type="match status" value="1"/>
</dbReference>
<dbReference type="PROSITE" id="PS51898">
    <property type="entry name" value="TYR_RECOMBINASE"/>
    <property type="match status" value="1"/>
</dbReference>
<comment type="similarity">
    <text evidence="3">Belongs to the 'phage' integrase family.</text>
</comment>
<proteinExistence type="inferred from homology"/>
<keyword id="KW-0229">DNA integration</keyword>
<keyword id="KW-0233">DNA recombination</keyword>
<keyword id="KW-0238">DNA-binding</keyword>
<keyword id="KW-0814">Transposable element</keyword>
<keyword id="KW-1179">Viral genome integration</keyword>
<keyword id="KW-1160">Virus entry into host cell</keyword>
<name>TNR5_STREE</name>
<gene>
    <name type="primary">int</name>
</gene>
<organism>
    <name type="scientific">Streptococcus pneumoniae</name>
    <dbReference type="NCBI Taxonomy" id="1313"/>
    <lineage>
        <taxon>Bacteria</taxon>
        <taxon>Bacillati</taxon>
        <taxon>Bacillota</taxon>
        <taxon>Bacilli</taxon>
        <taxon>Lactobacillales</taxon>
        <taxon>Streptococcaceae</taxon>
        <taxon>Streptococcus</taxon>
    </lineage>
</organism>
<reference key="1">
    <citation type="journal article" date="1989" name="EMBO J.">
        <title>Molecular characterization of two proteins involved in the excision of the conjugative transposon Tn1545: homologies with other site-specific recombinases.</title>
        <authorList>
            <person name="Poyart-Salmeron C."/>
            <person name="Trieu-Cuot P."/>
            <person name="Carlier C."/>
            <person name="Courvalin P."/>
        </authorList>
    </citation>
    <scope>NUCLEOTIDE SEQUENCE [GENOMIC DNA]</scope>
    <source>
        <transposon>Tn1545</transposon>
    </source>
</reference>
<feature type="chain" id="PRO_0000197558" description="Transposase from transposon Tn1545">
    <location>
        <begin position="1"/>
        <end position="405"/>
    </location>
</feature>
<feature type="domain" description="Core-binding (CB)" evidence="2">
    <location>
        <begin position="79"/>
        <end position="163"/>
    </location>
</feature>
<feature type="domain" description="Tyr recombinase" evidence="1">
    <location>
        <begin position="186"/>
        <end position="392"/>
    </location>
</feature>
<feature type="active site" evidence="1">
    <location>
        <position position="225"/>
    </location>
</feature>
<feature type="active site" evidence="1">
    <location>
        <position position="264"/>
    </location>
</feature>
<feature type="active site" evidence="1">
    <location>
        <position position="343"/>
    </location>
</feature>
<feature type="active site" evidence="1">
    <location>
        <position position="346"/>
    </location>
</feature>
<feature type="active site" evidence="1">
    <location>
        <position position="369"/>
    </location>
</feature>
<feature type="active site" description="O-(3'-phospho-DNA)-tyrosine intermediate" evidence="1">
    <location>
        <position position="379"/>
    </location>
</feature>
<evidence type="ECO:0000255" key="1">
    <source>
        <dbReference type="PROSITE-ProRule" id="PRU01246"/>
    </source>
</evidence>
<evidence type="ECO:0000255" key="2">
    <source>
        <dbReference type="PROSITE-ProRule" id="PRU01248"/>
    </source>
</evidence>
<evidence type="ECO:0000305" key="3"/>
<accession>P62905</accession>
<accession>P27451</accession>